<proteinExistence type="evidence at protein level"/>
<accession>P0DMA5</accession>
<accession>U6BRW2</accession>
<evidence type="ECO:0000250" key="1"/>
<evidence type="ECO:0000250" key="2">
    <source>
        <dbReference type="UniProtKB" id="D0E0C2"/>
    </source>
</evidence>
<evidence type="ECO:0000250" key="3">
    <source>
        <dbReference type="UniProtKB" id="P15389"/>
    </source>
</evidence>
<evidence type="ECO:0000250" key="4">
    <source>
        <dbReference type="UniProtKB" id="Q14524"/>
    </source>
</evidence>
<evidence type="ECO:0000255" key="5"/>
<evidence type="ECO:0000256" key="6">
    <source>
        <dbReference type="SAM" id="MobiDB-lite"/>
    </source>
</evidence>
<evidence type="ECO:0000269" key="7">
    <source>
    </source>
</evidence>
<evidence type="ECO:0000269" key="8">
    <source>
    </source>
</evidence>
<evidence type="ECO:0000305" key="9"/>
<evidence type="ECO:0000305" key="10">
    <source>
    </source>
</evidence>
<dbReference type="EMBL" id="KF717604">
    <property type="protein sequence ID" value="AHA38158.1"/>
    <property type="molecule type" value="mRNA"/>
</dbReference>
<dbReference type="SMR" id="P0DMA5"/>
<dbReference type="GlyCosmos" id="P0DMA5">
    <property type="glycosylation" value="3 sites, No reported glycans"/>
</dbReference>
<dbReference type="GO" id="GO:0005886">
    <property type="term" value="C:plasma membrane"/>
    <property type="evidence" value="ECO:0000250"/>
    <property type="project" value="UniProtKB"/>
</dbReference>
<dbReference type="GO" id="GO:0001518">
    <property type="term" value="C:voltage-gated sodium channel complex"/>
    <property type="evidence" value="ECO:0007669"/>
    <property type="project" value="InterPro"/>
</dbReference>
<dbReference type="GO" id="GO:0005248">
    <property type="term" value="F:voltage-gated sodium channel activity"/>
    <property type="evidence" value="ECO:0000250"/>
    <property type="project" value="UniProtKB"/>
</dbReference>
<dbReference type="GO" id="GO:0086006">
    <property type="term" value="F:voltage-gated sodium channel activity involved in cardiac muscle cell action potential"/>
    <property type="evidence" value="ECO:0007669"/>
    <property type="project" value="TreeGrafter"/>
</dbReference>
<dbReference type="GO" id="GO:0086010">
    <property type="term" value="P:membrane depolarization during action potential"/>
    <property type="evidence" value="ECO:0000250"/>
    <property type="project" value="UniProtKB"/>
</dbReference>
<dbReference type="GO" id="GO:0019228">
    <property type="term" value="P:neuronal action potential"/>
    <property type="evidence" value="ECO:0007669"/>
    <property type="project" value="TreeGrafter"/>
</dbReference>
<dbReference type="GO" id="GO:0060371">
    <property type="term" value="P:regulation of atrial cardiac muscle cell membrane depolarization"/>
    <property type="evidence" value="ECO:0007669"/>
    <property type="project" value="TreeGrafter"/>
</dbReference>
<dbReference type="GO" id="GO:0002027">
    <property type="term" value="P:regulation of heart rate"/>
    <property type="evidence" value="ECO:0007669"/>
    <property type="project" value="TreeGrafter"/>
</dbReference>
<dbReference type="CDD" id="cd13433">
    <property type="entry name" value="Na_channel_gate"/>
    <property type="match status" value="1"/>
</dbReference>
<dbReference type="FunFam" id="1.10.238.10:FF:000002">
    <property type="entry name" value="Sodium channel protein"/>
    <property type="match status" value="1"/>
</dbReference>
<dbReference type="FunFam" id="1.10.287.70:FF:000001">
    <property type="entry name" value="Sodium channel protein"/>
    <property type="match status" value="1"/>
</dbReference>
<dbReference type="FunFam" id="1.20.120.350:FF:000002">
    <property type="entry name" value="Sodium channel protein"/>
    <property type="match status" value="1"/>
</dbReference>
<dbReference type="FunFam" id="1.20.120.350:FF:000004">
    <property type="entry name" value="Sodium channel protein"/>
    <property type="match status" value="1"/>
</dbReference>
<dbReference type="FunFam" id="1.20.120.350:FF:000049">
    <property type="entry name" value="Sodium channel protein"/>
    <property type="match status" value="1"/>
</dbReference>
<dbReference type="FunFam" id="1.20.5.1190:FF:000007">
    <property type="entry name" value="Sodium channel protein"/>
    <property type="match status" value="1"/>
</dbReference>
<dbReference type="FunFam" id="1.20.120.350:FF:000003">
    <property type="entry name" value="Voltage-dependent sodium channel"/>
    <property type="match status" value="1"/>
</dbReference>
<dbReference type="FunFam" id="1.10.287.70:FF:000049">
    <property type="entry name" value="Voltage-dependent sodium channel 2"/>
    <property type="match status" value="1"/>
</dbReference>
<dbReference type="Gene3D" id="1.10.287.70">
    <property type="match status" value="4"/>
</dbReference>
<dbReference type="Gene3D" id="1.10.238.10">
    <property type="entry name" value="EF-hand"/>
    <property type="match status" value="1"/>
</dbReference>
<dbReference type="Gene3D" id="1.20.5.1190">
    <property type="entry name" value="iswi atpase"/>
    <property type="match status" value="1"/>
</dbReference>
<dbReference type="Gene3D" id="1.20.120.350">
    <property type="entry name" value="Voltage-gated potassium channels. Chain C"/>
    <property type="match status" value="4"/>
</dbReference>
<dbReference type="InterPro" id="IPR005821">
    <property type="entry name" value="Ion_trans_dom"/>
</dbReference>
<dbReference type="InterPro" id="IPR001696">
    <property type="entry name" value="Na_channel_asu"/>
</dbReference>
<dbReference type="InterPro" id="IPR044564">
    <property type="entry name" value="Na_chnl_inactivation_gate"/>
</dbReference>
<dbReference type="InterPro" id="IPR010526">
    <property type="entry name" value="Na_trans_assoc_dom"/>
</dbReference>
<dbReference type="InterPro" id="IPR043203">
    <property type="entry name" value="VGCC_Ca_Na"/>
</dbReference>
<dbReference type="InterPro" id="IPR027359">
    <property type="entry name" value="Volt_channel_dom_sf"/>
</dbReference>
<dbReference type="PANTHER" id="PTHR10037:SF208">
    <property type="entry name" value="SODIUM CHANNEL PROTEIN TYPE 10 SUBUNIT ALPHA"/>
    <property type="match status" value="1"/>
</dbReference>
<dbReference type="PANTHER" id="PTHR10037">
    <property type="entry name" value="VOLTAGE-GATED CATION CHANNEL CALCIUM AND SODIUM"/>
    <property type="match status" value="1"/>
</dbReference>
<dbReference type="Pfam" id="PF00520">
    <property type="entry name" value="Ion_trans"/>
    <property type="match status" value="4"/>
</dbReference>
<dbReference type="Pfam" id="PF24609">
    <property type="entry name" value="IQ_SCN5A_C"/>
    <property type="match status" value="1"/>
</dbReference>
<dbReference type="Pfam" id="PF06512">
    <property type="entry name" value="Na_trans_assoc"/>
    <property type="match status" value="1"/>
</dbReference>
<dbReference type="PRINTS" id="PR00170">
    <property type="entry name" value="NACHANNEL"/>
</dbReference>
<dbReference type="SUPFAM" id="SSF81324">
    <property type="entry name" value="Voltage-gated potassium channels"/>
    <property type="match status" value="4"/>
</dbReference>
<name>SCNAA_ONYTO</name>
<gene>
    <name type="primary">Scn10a</name>
    <name type="synonym">Sns</name>
</gene>
<protein>
    <recommendedName>
        <fullName>Sodium channel protein type 10 subunit alpha</fullName>
    </recommendedName>
</protein>
<comment type="function">
    <text evidence="7">Tetrodotoxin-resistant channel that mediates the voltage-dependent sodium ion permeability of excitable membranes. Assuming opened or closed conformations in response to the voltage difference across the membrane, the protein forms a sodium-selective channel through which sodium ions may pass in accordance with their electrochemical gradient. Plays a role in neuropathic pain mechanisms.</text>
</comment>
<comment type="catalytic activity">
    <reaction evidence="7">
        <text>Na(+)(in) = Na(+)(out)</text>
        <dbReference type="Rhea" id="RHEA:34963"/>
        <dbReference type="ChEBI" id="CHEBI:29101"/>
    </reaction>
</comment>
<comment type="subunit">
    <text evidence="1">The channel consists of an ion conducting pore forming alpha-subunit regulated by one or more associated auxiliary subunits SCN1B, SCN2B and SCN3B; electrophysiological properties may vary depending on the type of the associated beta subunits. Found in a number of complexes with PRX, DYNLT1 and PDZD2. Interacts with proteins such as FSTL1, PRX, DYNLT1, PDZD2, S100A10 and many others. Interacts with NEDD4 and NEDD4L (By similarity).</text>
</comment>
<comment type="subcellular location">
    <subcellularLocation>
        <location evidence="2">Cell membrane</location>
        <topology evidence="2">Multi-pass membrane protein</topology>
    </subcellularLocation>
    <text evidence="1">It can be translocated to the cell membrane through association with S100A10.</text>
</comment>
<comment type="domain">
    <text evidence="9">The sequence contains 4 internal repeats, each with 5 hydrophobic segments (S1, S2, S3, S5, S6) and one positively charged segment (S4). Segments S4 are probably the voltage-sensors and are characterized by a series of positively charged amino acids at every third position.</text>
</comment>
<comment type="PTM">
    <text evidence="9">Ubiquitinated by NEDD4L; which promotes its endocytosis.</text>
</comment>
<comment type="PTM">
    <text evidence="1">Phosphorylation at Ser-1453 by PKC in a highly conserved cytoplasmic loop slows inactivation of the sodium channel and reduces peak sodium currents.</text>
</comment>
<comment type="PTM">
    <text evidence="3">Lacks the cysteine which covalently binds the conotoxin GVIIJ. This cysteine (position 816) is speculated in other sodium channel subunits alpha to be implied in covalent binding with the sodium channel subunit beta-2 or beta-4.</text>
</comment>
<comment type="miscellaneous">
    <text evidence="10">O.torridus is resistant to the pain-inducing components of the venom of its prey, the bark scorpion (Centruroides sculpturatus). It is most probably due to the unique inhibition by some venom components of the Scn10a sodium-channel in those rodents. Inhibition of Snc10a would, in turn, inhibit sodium currents, block action potential propagation and induce analgesia. Glu-862 plays a central role in that inhibition and its replacement by a Gln, the corresponding amino acid found in the M.musculus ortholog, prevents the inhibition of Snc10a. This would explain why the venom induces pain in M.musculus but not in O.torridus (PubMed:24159039).</text>
</comment>
<comment type="similarity">
    <text evidence="9">Belongs to the sodium channel (TC 1.A.1.10) family. Nav1.8/SCN10A subfamily.</text>
</comment>
<comment type="online information" name="Protein Spotlight">
    <link uri="https://www.proteinspotlight.org/back_issues/157/"/>
    <text>A pain soothed - Issue 157 of January 2014</text>
</comment>
<sequence>MEFPIGSVGTTNFRRFTPESLAEIEKQIAAHGAAKKARAKHGERKGQDEKPRPQLDLKACNQLPRFYGELPAELVGEPLEDLDPFYSTHRTFMVLNKGRTISRFSATWALWLFSPFNLIRRTAIKVSVHAWFSIFITITILFNCVCMTQNDLPEKIEYAFTVIYTFEALIKILARGFCLNEFTYLRDPWNWLDFSVITLAYVGAAIDLRGISGLRTFRVLRALKTVSVIPGLKVIVGALIHSVRKLADVTILTVFCLSVFALVGLQLFKGNLKNKCIKRSTDPHNAYNFSSQMADNFYIKNGTTEPLLCGNGSDAGHCPSGYICLKTSDNPDFNYTSFDSFAWAFLSLFRLMTQDSWERLYQQTLRASGKMYMVFFVLVIFLGSFYLVNLILAVVTMAYEEQNQATIAEIEAKEKKFQEALEVLQKEQEVLAALGIDTTSLHSHNGSPLAPKNANERKHRIKSRVSEGSTDDNRSPQSDPYNQRRMSFLGLSSGRRRASHSSVFHFRAPSQDVSFPDGITDDGVFHGDHESHRSSLLLARGAGQAGPLPRSPLASSPNPGPGHREEGQLTAPTGELTTGAPEDLALEAAGQKKNFLSAEYLNEPFRAQRAMSVVSIMTSVIEELEESKLRCPPCLINLAQKYLIWECCPKWMKFKMVLFELVTDPFAELTITLCIVVNTIFMAMEHYPMTDAFDAMLQAGNIVFTVFFTMEMAFKIIAFDPYYYFQKKWNVFDCVIVTVSLLELSIAKKGSLSVLRTFRLLRVFKLAKSWPTLNTLIKIIGNSVGALGNLTFILAIIVFIFALVGKQLLGEDYGCRKDGTALWNEGQLRWHMCDFFHSFLVIFRILCGEWIENMWVCMQVSEKSICLILFLTVMVLGNLVVLNLFIALLLNSFSADNLTAPEDDGEVNNLQVALARTQAFGQRASQAISSYFSSHCRLRWPKVGSQLGVKPSLTSSKAEHHITADAVNTAVGTSAKPALSGPKEDPRDFITDANVWVSVPIAEGESDLDELEEDIEQNSQSSWREESPKGQQDQLWQIQRCEDHQVPNSPGSGMSSEDLASYLGERWKSEATPQVPAEGVDDTSSSEGSTVDCPDPEEILKKIPELADDLEEPDDCFTEGCTRHCPCCKVSTSKFPWTTGWQVRKTCYRIVEHSWFESFIIFMILLSSGALAFEDNYLEQKPRVKSMLEYTDRVFTFIFVFEMLLKWVAYGFKKYFTNAWCWLDFLIVNISLTSLIAKILDYSDVASLKALRTLRALRPLRALSRFEGMRVVVDALVGAIPSIMNVLLVCLIFWLIFSIMGVNLFAGKFSRCIDTSNNPFSVVNSTIVNNKSECRNQNHTGHFFWVNVKVNFDNVAMGYLALLQVATFKGWMDIMYAAVDSREINSQPQWEDNLYMYLYFVVFIIFGGFFTLNLFVGVIIDNFNQQKKKLGGQDIFMTEEQKKYYNAMKKLGSKKPQKPIPRPLNKYQGFVFDIVTRQAFDIIIMVLICLNMITMMVETDGQSEEKTKILGRINQFFVAVFTGECVMKMFALRQYYFTNGWNVFDFIVVILSIGSLVFSAILKSLESYFSPTLFRVIRLARIGRILRLIRAAKGIRTLLFALMMSLPALFNIGLLLFLVMFIYSIFGMASFANVVEEAGIDDMFNFQTFGNSMLCLFQITTSAGWDGLLSPILNTGPPYCDPNLSNNNTSKGNCGSPTVGIVFFTTYIIISFLIVVNMYIAVILENFNVATEESTEPLSEDDFDMFYETWEKFDPEATQFIAFSALSDFADTLSGPLRIPKPNQNILIQMDLPLVPGDKIHCLDILFAFTKNVLGESGELDSLKTNMEEKFMATNLSKASYEPIATTLRWKQEDISATVIQKAYRSYVLQRSLTLSNPLRVPRAEDDDAPLPGEGYVTFMANDSGRLPDKSETTSATSFPPSYDSVTRGLSDRVNISTSNSMHNEDEVTSKEGDSPGPQ</sequence>
<reference key="1">
    <citation type="journal article" date="2013" name="Science">
        <title>Voltage-gated sodium channel in grasshopper mice defends against bark scorpion toxin.</title>
        <authorList>
            <person name="Rowe A.H."/>
            <person name="Xiao Y."/>
            <person name="Rowe M.P."/>
            <person name="Cummins T.R."/>
            <person name="Zakon H.H."/>
        </authorList>
    </citation>
    <scope>NUCLEOTIDE SEQUENCE [MRNA]</scope>
    <scope>FUNCTION</scope>
    <scope>TRANSPORTER ACTIVITY</scope>
    <scope>MUTAGENESIS OF 746-ILE--ALA-747 AND 859-GLN--GLN-862</scope>
</reference>
<reference key="2">
    <citation type="journal article" date="2022" name="Front. Pharmacol.">
        <title>Structural and functional characterization of a novel scorpion toxin that inhibits NaV1.8 via interactions with the DI voltage sensor and DII pore module.</title>
        <authorList>
            <person name="George K."/>
            <person name="Lopez-Mateos D."/>
            <person name="Abd El-Aziz T.M."/>
            <person name="Xiao Y."/>
            <person name="Kline J."/>
            <person name="Bao H."/>
            <person name="Raza S."/>
            <person name="Stockand J.D."/>
            <person name="Cummins T.R."/>
            <person name="Fornelli L."/>
            <person name="Rowe M.P."/>
            <person name="Yarov-Yarovoy V."/>
            <person name="Rowe A.H."/>
        </authorList>
    </citation>
    <scope>MUTAGENESIS OF ARG-215; ARG-218; 756-ARG--ARG-759 AND 859-GLN--GLN-862</scope>
    <scope>3D-STRUCTURE MODELING IN COMPLEX WITH SCORPION NATX36 TOXIN</scope>
</reference>
<feature type="chain" id="PRO_0000424959" description="Sodium channel protein type 10 subunit alpha">
    <location>
        <begin position="1"/>
        <end position="1959"/>
    </location>
</feature>
<feature type="topological domain" description="Cytoplasmic" evidence="9">
    <location>
        <begin position="1"/>
        <end position="125"/>
    </location>
</feature>
<feature type="transmembrane region" description="Helical; Name=S1 of repeat I" evidence="5">
    <location>
        <begin position="126"/>
        <end position="149"/>
    </location>
</feature>
<feature type="topological domain" description="Extracellular" evidence="9">
    <location>
        <begin position="150"/>
        <end position="154"/>
    </location>
</feature>
<feature type="transmembrane region" description="Helical; Name=S2 of repeat I" evidence="5">
    <location>
        <begin position="155"/>
        <end position="174"/>
    </location>
</feature>
<feature type="topological domain" description="Cytoplasmic" evidence="9">
    <location>
        <begin position="175"/>
        <end position="187"/>
    </location>
</feature>
<feature type="transmembrane region" description="Helical; Name=S3 of repeat I" evidence="5">
    <location>
        <begin position="188"/>
        <end position="206"/>
    </location>
</feature>
<feature type="topological domain" description="Extracellular" evidence="9">
    <location>
        <begin position="207"/>
        <end position="212"/>
    </location>
</feature>
<feature type="transmembrane region" description="Helical; Voltage-sensor; Name=S4 of repeat I" evidence="5">
    <location>
        <begin position="213"/>
        <end position="232"/>
    </location>
</feature>
<feature type="topological domain" description="Cytoplasmic" evidence="9">
    <location>
        <begin position="233"/>
        <end position="248"/>
    </location>
</feature>
<feature type="transmembrane region" description="Helical; Name=S5 of repeat I" evidence="5">
    <location>
        <begin position="249"/>
        <end position="272"/>
    </location>
</feature>
<feature type="topological domain" description="Extracellular" evidence="9">
    <location>
        <begin position="273"/>
        <end position="340"/>
    </location>
</feature>
<feature type="intramembrane region" description="Pore-forming" evidence="2">
    <location>
        <begin position="341"/>
        <end position="365"/>
    </location>
</feature>
<feature type="topological domain" description="Extracellular" evidence="9">
    <location>
        <begin position="366"/>
        <end position="372"/>
    </location>
</feature>
<feature type="transmembrane region" description="Helical; Name=S6 of repeat I" evidence="5">
    <location>
        <begin position="373"/>
        <end position="398"/>
    </location>
</feature>
<feature type="topological domain" description="Cytoplasmic" evidence="9">
    <location>
        <begin position="399"/>
        <end position="659"/>
    </location>
</feature>
<feature type="transmembrane region" description="Helical; Name=S1 of repeat II" evidence="5">
    <location>
        <begin position="660"/>
        <end position="684"/>
    </location>
</feature>
<feature type="topological domain" description="Extracellular" evidence="9">
    <location>
        <begin position="685"/>
        <end position="695"/>
    </location>
</feature>
<feature type="transmembrane region" description="Helical; Name=S2 of repeat II" evidence="5">
    <location>
        <begin position="696"/>
        <end position="719"/>
    </location>
</feature>
<feature type="topological domain" description="Cytoplasmic" evidence="9">
    <location>
        <begin position="720"/>
        <end position="727"/>
    </location>
</feature>
<feature type="transmembrane region" description="Helical; Name=S3 of repeat II" evidence="5">
    <location>
        <begin position="728"/>
        <end position="747"/>
    </location>
</feature>
<feature type="topological domain" description="Extracellular" evidence="9">
    <location>
        <begin position="748"/>
        <end position="753"/>
    </location>
</feature>
<feature type="transmembrane region" description="Helical; Voltage-sensor; Name=S4 of repeat II" evidence="5">
    <location>
        <begin position="754"/>
        <end position="773"/>
    </location>
</feature>
<feature type="topological domain" description="Cytoplasmic" evidence="9">
    <location>
        <begin position="774"/>
        <end position="789"/>
    </location>
</feature>
<feature type="transmembrane region" description="Helical; Name=S5 of repeat II" evidence="5">
    <location>
        <begin position="790"/>
        <end position="810"/>
    </location>
</feature>
<feature type="topological domain" description="Extracellular" evidence="9">
    <location>
        <begin position="811"/>
        <end position="834"/>
    </location>
</feature>
<feature type="intramembrane region" description="Pore-forming" evidence="2">
    <location>
        <begin position="835"/>
        <end position="855"/>
    </location>
</feature>
<feature type="topological domain" description="Extracellular" evidence="9">
    <location>
        <begin position="856"/>
        <end position="864"/>
    </location>
</feature>
<feature type="transmembrane region" description="Helical; Name=S6 of repeat II" evidence="5">
    <location>
        <begin position="865"/>
        <end position="890"/>
    </location>
</feature>
<feature type="topological domain" description="Cytoplasmic" evidence="9">
    <location>
        <begin position="891"/>
        <end position="1149"/>
    </location>
</feature>
<feature type="transmembrane region" description="Helical; Name=S1 of repeat III" evidence="5">
    <location>
        <begin position="1150"/>
        <end position="1173"/>
    </location>
</feature>
<feature type="topological domain" description="Extracellular" evidence="9">
    <location>
        <begin position="1174"/>
        <end position="1186"/>
    </location>
</feature>
<feature type="transmembrane region" description="Helical; Name=S2 of repeat III" evidence="5">
    <location>
        <begin position="1187"/>
        <end position="1212"/>
    </location>
</feature>
<feature type="topological domain" description="Cytoplasmic" evidence="9">
    <location>
        <begin position="1213"/>
        <end position="1218"/>
    </location>
</feature>
<feature type="transmembrane region" description="Helical; Name=S3 of repeat III" evidence="5">
    <location>
        <begin position="1219"/>
        <end position="1240"/>
    </location>
</feature>
<feature type="topological domain" description="Extracellular" evidence="9">
    <location>
        <begin position="1241"/>
        <end position="1244"/>
    </location>
</feature>
<feature type="transmembrane region" description="Helical; Voltage-sensor; Name=S4 of repeat III" evidence="5">
    <location>
        <begin position="1245"/>
        <end position="1266"/>
    </location>
</feature>
<feature type="topological domain" description="Cytoplasmic" evidence="9">
    <location>
        <begin position="1267"/>
        <end position="1285"/>
    </location>
</feature>
<feature type="transmembrane region" description="Helical; Name=S5 of repeat III" evidence="5">
    <location>
        <begin position="1286"/>
        <end position="1313"/>
    </location>
</feature>
<feature type="topological domain" description="Extracellular" evidence="9">
    <location>
        <begin position="1314"/>
        <end position="1355"/>
    </location>
</feature>
<feature type="intramembrane region" description="Pore-forming" evidence="2">
    <location>
        <begin position="1356"/>
        <end position="1377"/>
    </location>
</feature>
<feature type="topological domain" description="Extracellular" evidence="9">
    <location>
        <begin position="1378"/>
        <end position="1393"/>
    </location>
</feature>
<feature type="transmembrane region" description="Helical; Name=S6 of repeat III" evidence="5">
    <location>
        <begin position="1394"/>
        <end position="1420"/>
    </location>
</feature>
<feature type="topological domain" description="Cytoplasmic" evidence="9">
    <location>
        <begin position="1421"/>
        <end position="1473"/>
    </location>
</feature>
<feature type="transmembrane region" description="Helical; Name=S1 of repeat IV" evidence="5">
    <location>
        <begin position="1474"/>
        <end position="1497"/>
    </location>
</feature>
<feature type="topological domain" description="Extracellular" evidence="9">
    <location>
        <begin position="1498"/>
        <end position="1508"/>
    </location>
</feature>
<feature type="transmembrane region" description="Helical; Name=S2 of repeat IV" evidence="5">
    <location>
        <begin position="1509"/>
        <end position="1532"/>
    </location>
</feature>
<feature type="topological domain" description="Cytoplasmic" evidence="9">
    <location>
        <begin position="1533"/>
        <end position="1538"/>
    </location>
</feature>
<feature type="transmembrane region" description="Helical; Name=S3 of repeat IV" evidence="5">
    <location>
        <begin position="1539"/>
        <end position="1562"/>
    </location>
</feature>
<feature type="topological domain" description="Extracellular" evidence="9">
    <location>
        <begin position="1563"/>
        <end position="1574"/>
    </location>
</feature>
<feature type="transmembrane region" description="Helical; Voltage-sensor; Name=S4 of repeat IV" evidence="5">
    <location>
        <begin position="1575"/>
        <end position="1596"/>
    </location>
</feature>
<feature type="topological domain" description="Cytoplasmic" evidence="9">
    <location>
        <begin position="1597"/>
        <end position="1611"/>
    </location>
</feature>
<feature type="transmembrane region" description="Helical; Name=S5 of repeat IV" evidence="5">
    <location>
        <begin position="1612"/>
        <end position="1634"/>
    </location>
</feature>
<feature type="topological domain" description="Extracellular" evidence="9">
    <location>
        <begin position="1635"/>
        <end position="1648"/>
    </location>
</feature>
<feature type="intramembrane region" description="Pore-forming" evidence="2">
    <location>
        <begin position="1649"/>
        <end position="1671"/>
    </location>
</feature>
<feature type="topological domain" description="Extracellular" evidence="9">
    <location>
        <begin position="1672"/>
        <end position="1699"/>
    </location>
</feature>
<feature type="transmembrane region" description="Helical; Name=S6 of repeat IV" evidence="5">
    <location>
        <begin position="1700"/>
        <end position="1724"/>
    </location>
</feature>
<feature type="topological domain" description="Cytoplasmic" evidence="9">
    <location>
        <begin position="1725"/>
        <end position="1959"/>
    </location>
</feature>
<feature type="repeat" description="I" evidence="9">
    <location>
        <begin position="116"/>
        <end position="404"/>
    </location>
</feature>
<feature type="repeat" description="II" evidence="9">
    <location>
        <begin position="647"/>
        <end position="911"/>
    </location>
</feature>
<feature type="repeat" description="III" evidence="9">
    <location>
        <begin position="1142"/>
        <end position="1451"/>
    </location>
</feature>
<feature type="repeat" description="IV" evidence="9">
    <location>
        <begin position="1460"/>
        <end position="1759"/>
    </location>
</feature>
<feature type="domain" description="IQ">
    <location>
        <begin position="1853"/>
        <end position="1882"/>
    </location>
</feature>
<feature type="region of interest" description="Disordered" evidence="6">
    <location>
        <begin position="30"/>
        <end position="53"/>
    </location>
</feature>
<feature type="region of interest" description="Disordered" evidence="6">
    <location>
        <begin position="442"/>
        <end position="484"/>
    </location>
</feature>
<feature type="region of interest" description="Disordered" evidence="6">
    <location>
        <begin position="510"/>
        <end position="578"/>
    </location>
</feature>
<feature type="region of interest" description="Disordered" evidence="6">
    <location>
        <begin position="1004"/>
        <end position="1034"/>
    </location>
</feature>
<feature type="region of interest" description="Disordered" evidence="6">
    <location>
        <begin position="1071"/>
        <end position="1097"/>
    </location>
</feature>
<feature type="region of interest" description="Disordered" evidence="6">
    <location>
        <begin position="1901"/>
        <end position="1959"/>
    </location>
</feature>
<feature type="compositionally biased region" description="Basic residues" evidence="6">
    <location>
        <begin position="33"/>
        <end position="43"/>
    </location>
</feature>
<feature type="compositionally biased region" description="Basic and acidic residues" evidence="6">
    <location>
        <begin position="44"/>
        <end position="53"/>
    </location>
</feature>
<feature type="compositionally biased region" description="Polar residues" evidence="6">
    <location>
        <begin position="475"/>
        <end position="484"/>
    </location>
</feature>
<feature type="compositionally biased region" description="Basic and acidic residues" evidence="6">
    <location>
        <begin position="523"/>
        <end position="533"/>
    </location>
</feature>
<feature type="compositionally biased region" description="Acidic residues" evidence="6">
    <location>
        <begin position="1004"/>
        <end position="1016"/>
    </location>
</feature>
<feature type="compositionally biased region" description="Basic and acidic residues" evidence="6">
    <location>
        <begin position="1943"/>
        <end position="1959"/>
    </location>
</feature>
<feature type="modified residue" description="Phosphoserine" evidence="4">
    <location>
        <position position="440"/>
    </location>
</feature>
<feature type="modified residue" description="Phosphoserine" evidence="4">
    <location>
        <position position="443"/>
    </location>
</feature>
<feature type="modified residue" description="Phosphoserine" evidence="4">
    <location>
        <position position="466"/>
    </location>
</feature>
<feature type="modified residue" description="Phosphoserine" evidence="4">
    <location>
        <position position="478"/>
    </location>
</feature>
<feature type="modified residue" description="Phosphoserine" evidence="4">
    <location>
        <position position="612"/>
    </location>
</feature>
<feature type="modified residue" description="Phosphoserine" evidence="4">
    <location>
        <position position="615"/>
    </location>
</feature>
<feature type="modified residue" description="Phosphoserine; by PKC" evidence="4">
    <location>
        <position position="1453"/>
    </location>
</feature>
<feature type="glycosylation site" description="N-linked (GlcNAc...) asparagine" evidence="5">
    <location>
        <position position="288"/>
    </location>
</feature>
<feature type="glycosylation site" description="N-linked (GlcNAc...) asparagine" evidence="5">
    <location>
        <position position="311"/>
    </location>
</feature>
<feature type="glycosylation site" description="N-linked (GlcNAc...) asparagine" evidence="5">
    <location>
        <position position="334"/>
    </location>
</feature>
<feature type="disulfide bond" evidence="2">
    <location>
        <begin position="276"/>
        <end position="318"/>
    </location>
</feature>
<feature type="disulfide bond" evidence="2">
    <location>
        <begin position="857"/>
        <end position="866"/>
    </location>
</feature>
<feature type="mutagenesis site" description="Complete loss of inhibition by the venom of Centruroides sculpturatus. Decrease in inhibition by the venom of Centruroides sculpturatus; when associated with G-218." evidence="8">
    <original>R</original>
    <variation>G</variation>
    <location>
        <position position="215"/>
    </location>
</feature>
<feature type="mutagenesis site" description="Decrease in inhibition by the venom of Centruroides sculpturatus; when associated with G-215." evidence="8">
    <original>R</original>
    <variation>G</variation>
    <location>
        <position position="218"/>
    </location>
</feature>
<feature type="mutagenesis site" description="No effect on inhibition by the venom of Centruroides sculpturatus." evidence="7">
    <original>IA</original>
    <variation>TS</variation>
    <location>
        <begin position="746"/>
        <end position="747"/>
    </location>
</feature>
<feature type="mutagenesis site" description="No change in inhibition by the venom of Centruroides sculpturatus." evidence="8">
    <original>RTFR</original>
    <variation>GTFG</variation>
    <location>
        <begin position="756"/>
        <end position="759"/>
    </location>
</feature>
<feature type="mutagenesis site" description="Complete loss of inhibition by the venom of Centruroides sculpturatus." evidence="7 8">
    <original>QVSE</original>
    <variation>EVSQ</variation>
    <location>
        <begin position="859"/>
        <end position="862"/>
    </location>
</feature>
<organism>
    <name type="scientific">Onychomys torridus</name>
    <name type="common">Southern grasshopper mouse</name>
    <name type="synonym">Hesperomys torridus</name>
    <dbReference type="NCBI Taxonomy" id="38674"/>
    <lineage>
        <taxon>Eukaryota</taxon>
        <taxon>Metazoa</taxon>
        <taxon>Chordata</taxon>
        <taxon>Craniata</taxon>
        <taxon>Vertebrata</taxon>
        <taxon>Euteleostomi</taxon>
        <taxon>Mammalia</taxon>
        <taxon>Eutheria</taxon>
        <taxon>Euarchontoglires</taxon>
        <taxon>Glires</taxon>
        <taxon>Rodentia</taxon>
        <taxon>Myomorpha</taxon>
        <taxon>Muroidea</taxon>
        <taxon>Cricetidae</taxon>
        <taxon>Neotominae</taxon>
        <taxon>Onychomys</taxon>
    </lineage>
</organism>
<keyword id="KW-1003">Cell membrane</keyword>
<keyword id="KW-1015">Disulfide bond</keyword>
<keyword id="KW-0325">Glycoprotein</keyword>
<keyword id="KW-0407">Ion channel</keyword>
<keyword id="KW-0406">Ion transport</keyword>
<keyword id="KW-0472">Membrane</keyword>
<keyword id="KW-0597">Phosphoprotein</keyword>
<keyword id="KW-0677">Repeat</keyword>
<keyword id="KW-0915">Sodium</keyword>
<keyword id="KW-0894">Sodium channel</keyword>
<keyword id="KW-0739">Sodium transport</keyword>
<keyword id="KW-0812">Transmembrane</keyword>
<keyword id="KW-1133">Transmembrane helix</keyword>
<keyword id="KW-0813">Transport</keyword>
<keyword id="KW-0832">Ubl conjugation</keyword>
<keyword id="KW-0851">Voltage-gated channel</keyword>